<protein>
    <recommendedName>
        <fullName evidence="6">Tirucalladienol synthase OSC1</fullName>
        <ecNumber evidence="3">5.4.99.56</ecNumber>
    </recommendedName>
    <alternativeName>
        <fullName evidence="4">Oxidosqualene cyclase 1</fullName>
        <shortName evidence="4">CsOSC1</shortName>
    </alternativeName>
</protein>
<comment type="function">
    <text evidence="3">Oxidosqualene cyclase involved in the biosynthesis of limonoids triterpene natural products such as limonin, a compound with insecticidal activity responsible for the bitter taste in citrus (PubMed:31371503). Converts 2,3-oxidosqualene (2,3-epoxysqualene) into tirucalladienol, generating rings and asymmetric centers in a single transformation (PubMed:31371503).</text>
</comment>
<comment type="catalytic activity">
    <reaction evidence="3">
        <text>(S)-2,3-epoxysqualene = tirucalla-7,24-dien-3beta-ol</text>
        <dbReference type="Rhea" id="RHEA:31887"/>
        <dbReference type="ChEBI" id="CHEBI:15441"/>
        <dbReference type="ChEBI" id="CHEBI:63468"/>
        <dbReference type="EC" id="5.4.99.56"/>
    </reaction>
    <physiologicalReaction direction="left-to-right" evidence="3">
        <dbReference type="Rhea" id="RHEA:31888"/>
    </physiologicalReaction>
</comment>
<comment type="pathway">
    <text evidence="3">Secondary metabolite biosynthesis; terpenoid biosynthesis.</text>
</comment>
<comment type="similarity">
    <text evidence="5">Belongs to the terpene cyclase/mutase family.</text>
</comment>
<comment type="sequence caution" evidence="5">
    <conflict type="erroneous gene model prediction">
        <sequence resource="EMBL-CDS" id="KDO48982"/>
    </conflict>
</comment>
<name>OSC1_CITSI</name>
<feature type="chain" id="PRO_0000461330" description="Tirucalladienol synthase OSC1">
    <location>
        <begin position="1"/>
        <end position="761"/>
    </location>
</feature>
<feature type="repeat" description="PFTB 1" evidence="2">
    <location>
        <begin position="99"/>
        <end position="141"/>
    </location>
</feature>
<feature type="repeat" description="PFTB 2" evidence="2">
    <location>
        <begin position="149"/>
        <end position="190"/>
    </location>
</feature>
<feature type="repeat" description="PFTB 3" evidence="2">
    <location>
        <begin position="441"/>
        <end position="485"/>
    </location>
</feature>
<feature type="repeat" description="PFTB 4" evidence="2">
    <location>
        <begin position="515"/>
        <end position="561"/>
    </location>
</feature>
<feature type="repeat" description="PFTB 5" evidence="2">
    <location>
        <begin position="593"/>
        <end position="633"/>
    </location>
</feature>
<feature type="repeat" description="PFTB 6" evidence="2">
    <location>
        <begin position="642"/>
        <end position="683"/>
    </location>
</feature>
<feature type="repeat" description="PFTB 7" evidence="2">
    <location>
        <begin position="704"/>
        <end position="745"/>
    </location>
</feature>
<feature type="active site" description="Proton donor" evidence="1">
    <location>
        <position position="486"/>
    </location>
</feature>
<reference key="1">
    <citation type="submission" date="2014-04" db="EMBL/GenBank/DDBJ databases">
        <authorList>
            <consortium name="International Citrus Genome Consortium"/>
            <person name="Gmitter F."/>
            <person name="Chen C."/>
            <person name="Farmerie W."/>
            <person name="Harkins T."/>
            <person name="Desany B."/>
            <person name="Mohiuddin M."/>
            <person name="Kodira C."/>
            <person name="Borodovsky M."/>
            <person name="Lomsadze A."/>
            <person name="Burns P."/>
            <person name="Jenkins J."/>
            <person name="Prochnik S."/>
            <person name="Shu S."/>
            <person name="Chapman J."/>
            <person name="Pitluck S."/>
            <person name="Schmutz J."/>
            <person name="Rokhsar D."/>
        </authorList>
    </citation>
    <scope>NUCLEOTIDE SEQUENCE [LARGE SCALE GENOMIC DNA]</scope>
    <source>
        <strain>cv. Ridge Pineapple sweet orange</strain>
    </source>
</reference>
<reference key="2">
    <citation type="journal article" date="2019" name="Proc. Natl. Acad. Sci. U.S.A.">
        <title>Identification of key enzymes responsible for protolimonoid biosynthesis in plants: Opening the door to azadirachtin production.</title>
        <authorList>
            <person name="Hodgson H."/>
            <person name="De La Pena R."/>
            <person name="Stephenson M.J."/>
            <person name="Thimmappa R."/>
            <person name="Vincent J.L."/>
            <person name="Sattely E.S."/>
            <person name="Osbourn A."/>
        </authorList>
    </citation>
    <scope>FUNCTION</scope>
    <scope>CATALYTIC ACTIVITY</scope>
    <scope>PATHWAY</scope>
</reference>
<organism>
    <name type="scientific">Citrus sinensis</name>
    <name type="common">Sweet orange</name>
    <name type="synonym">Citrus aurantium var. sinensis</name>
    <dbReference type="NCBI Taxonomy" id="2711"/>
    <lineage>
        <taxon>Eukaryota</taxon>
        <taxon>Viridiplantae</taxon>
        <taxon>Streptophyta</taxon>
        <taxon>Embryophyta</taxon>
        <taxon>Tracheophyta</taxon>
        <taxon>Spermatophyta</taxon>
        <taxon>Magnoliopsida</taxon>
        <taxon>eudicotyledons</taxon>
        <taxon>Gunneridae</taxon>
        <taxon>Pentapetalae</taxon>
        <taxon>rosids</taxon>
        <taxon>malvids</taxon>
        <taxon>Sapindales</taxon>
        <taxon>Rutaceae</taxon>
        <taxon>Aurantioideae</taxon>
        <taxon>Citrus</taxon>
    </lineage>
</organism>
<evidence type="ECO:0000250" key="1">
    <source>
        <dbReference type="UniProtKB" id="P48449"/>
    </source>
</evidence>
<evidence type="ECO:0000255" key="2"/>
<evidence type="ECO:0000269" key="3">
    <source>
    </source>
</evidence>
<evidence type="ECO:0000303" key="4">
    <source>
    </source>
</evidence>
<evidence type="ECO:0000305" key="5"/>
<evidence type="ECO:0000305" key="6">
    <source>
    </source>
</evidence>
<evidence type="ECO:0000312" key="7">
    <source>
        <dbReference type="EMBL" id="KDO48982.1"/>
    </source>
</evidence>
<sequence length="761" mass="87589">MWRLKVAEGDKNSPYMFTTNNFVGRQIWEFDPKAGSPEELAEVEEARQKFYKNRHNVKPAGDLLWRLQFLREKNFKQRIPQVKVKDGDAITYETATTAMKRAAHYFSAIQASDGHWPAENAGPMYFLPPFVFCLYITGHLNTVFTVEHRREILRYLYNHQHEDGGWGVHVEAPSSMFGTVFSYLCMRLLGLGPNDGENNACARARKWIRDHGGVTYIPSWGKNWLSILGIFEWSGTNPMPPEFWILPSFVPLHPSKMWCYCRLVYMPVSYLYGKRFVGPITPLIQQLREELHTQPYNEINWRKVRHLCSKEDLYYPHPFVQELLWDTLYLASEPLLTRWPLNKLIRQKALKETMKFIHYEDHNSRYITIGCVEKPLCMLACWVEDPNGIAFKKHLNRIADYIWLGEDGMKVQTFGSQTWDTALGLQALMACNIADEVESVLGKGHDYLKKAQIRDNPVGDYKGNFRHFSKGAWTFSDQDHGWQVSDCTAEGLKCVLQLSLMPPEIVGEKMEPERLYDAVNFLLSLQDEKTGGLAVWERAGASLLLEWLNPVEFLEDLIVEHTYVECTASAIEAFMLFKKLYPHHRKKEIENFIVKAVHYIEDEQTADGSWYGNWGICFIYGTCFALGGLQVAGKTYNNCLAIRRAVDFLLNAQSDDGGWGESYKSCPNKIYTPLEGKRSTVVHTALAVLSLISAGQADRDPTPIHRGVKLLINSQLENGDFPQQEIMGVFMRNCMLHYAEYRNIFPLRALAEYRKRVPLPN</sequence>
<dbReference type="EC" id="5.4.99.56" evidence="3"/>
<dbReference type="EMBL" id="KK785125">
    <property type="protein sequence ID" value="KDO48982.1"/>
    <property type="status" value="ALT_SEQ"/>
    <property type="molecule type" value="Genomic_DNA"/>
</dbReference>
<dbReference type="SMR" id="A0A067ECN5"/>
<dbReference type="STRING" id="2711.A0A067ECN5"/>
<dbReference type="PaxDb" id="2711-XP_006468116-1"/>
<dbReference type="eggNOG" id="KOG0497">
    <property type="taxonomic scope" value="Eukaryota"/>
</dbReference>
<dbReference type="UniPathway" id="UPA00213"/>
<dbReference type="Proteomes" id="UP000027120">
    <property type="component" value="Unassembled WGS sequence"/>
</dbReference>
<dbReference type="GO" id="GO:0005811">
    <property type="term" value="C:lipid droplet"/>
    <property type="evidence" value="ECO:0007669"/>
    <property type="project" value="InterPro"/>
</dbReference>
<dbReference type="GO" id="GO:0042300">
    <property type="term" value="F:beta-amyrin synthase activity"/>
    <property type="evidence" value="ECO:0000318"/>
    <property type="project" value="GO_Central"/>
</dbReference>
<dbReference type="GO" id="GO:0016104">
    <property type="term" value="P:triterpenoid biosynthetic process"/>
    <property type="evidence" value="ECO:0000318"/>
    <property type="project" value="GO_Central"/>
</dbReference>
<dbReference type="CDD" id="cd02892">
    <property type="entry name" value="SQCY_1"/>
    <property type="match status" value="1"/>
</dbReference>
<dbReference type="FunFam" id="1.50.10.20:FF:000044">
    <property type="entry name" value="Lupeol synthase"/>
    <property type="match status" value="1"/>
</dbReference>
<dbReference type="FunFam" id="1.50.10.20:FF:000011">
    <property type="entry name" value="Terpene cyclase/mutase family member"/>
    <property type="match status" value="1"/>
</dbReference>
<dbReference type="Gene3D" id="1.50.10.20">
    <property type="match status" value="2"/>
</dbReference>
<dbReference type="InterPro" id="IPR032696">
    <property type="entry name" value="SQ_cyclase_C"/>
</dbReference>
<dbReference type="InterPro" id="IPR032697">
    <property type="entry name" value="SQ_cyclase_N"/>
</dbReference>
<dbReference type="InterPro" id="IPR018333">
    <property type="entry name" value="Squalene_cyclase"/>
</dbReference>
<dbReference type="InterPro" id="IPR002365">
    <property type="entry name" value="Terpene_synthase_CS"/>
</dbReference>
<dbReference type="InterPro" id="IPR008930">
    <property type="entry name" value="Terpenoid_cyclase/PrenylTrfase"/>
</dbReference>
<dbReference type="NCBIfam" id="TIGR01787">
    <property type="entry name" value="squalene_cyclas"/>
    <property type="match status" value="1"/>
</dbReference>
<dbReference type="PANTHER" id="PTHR11764:SF58">
    <property type="entry name" value="BETA-AMYRIN SYNTHASE-RELATED"/>
    <property type="match status" value="1"/>
</dbReference>
<dbReference type="PANTHER" id="PTHR11764">
    <property type="entry name" value="TERPENE CYCLASE/MUTASE FAMILY MEMBER"/>
    <property type="match status" value="1"/>
</dbReference>
<dbReference type="Pfam" id="PF13243">
    <property type="entry name" value="SQHop_cyclase_C"/>
    <property type="match status" value="1"/>
</dbReference>
<dbReference type="Pfam" id="PF13249">
    <property type="entry name" value="SQHop_cyclase_N"/>
    <property type="match status" value="1"/>
</dbReference>
<dbReference type="SFLD" id="SFLDG01016">
    <property type="entry name" value="Prenyltransferase_Like_2"/>
    <property type="match status" value="1"/>
</dbReference>
<dbReference type="SUPFAM" id="SSF48239">
    <property type="entry name" value="Terpenoid cyclases/Protein prenyltransferases"/>
    <property type="match status" value="2"/>
</dbReference>
<dbReference type="PROSITE" id="PS01074">
    <property type="entry name" value="TERPENE_SYNTHASES"/>
    <property type="match status" value="1"/>
</dbReference>
<accession>A0A067ECN5</accession>
<proteinExistence type="evidence at protein level"/>
<keyword id="KW-0413">Isomerase</keyword>
<keyword id="KW-1185">Reference proteome</keyword>
<keyword id="KW-0677">Repeat</keyword>
<gene>
    <name evidence="4" type="primary">OSC1</name>
    <name evidence="7" type="ORF">CISIN_1g006042mg</name>
</gene>